<accession>Q83P61</accession>
<accession>Q7BYM0</accession>
<protein>
    <recommendedName>
        <fullName>pyr operon leader peptide</fullName>
    </recommendedName>
    <alternativeName>
        <fullName>pyrBI operon attenuator</fullName>
    </alternativeName>
</protein>
<organism>
    <name type="scientific">Shigella flexneri</name>
    <dbReference type="NCBI Taxonomy" id="623"/>
    <lineage>
        <taxon>Bacteria</taxon>
        <taxon>Pseudomonadati</taxon>
        <taxon>Pseudomonadota</taxon>
        <taxon>Gammaproteobacteria</taxon>
        <taxon>Enterobacterales</taxon>
        <taxon>Enterobacteriaceae</taxon>
        <taxon>Shigella</taxon>
    </lineage>
</organism>
<dbReference type="EMBL" id="AE005674">
    <property type="protein sequence ID" value="AAN45662.1"/>
    <property type="molecule type" value="Genomic_DNA"/>
</dbReference>
<dbReference type="EMBL" id="AE014073">
    <property type="protein sequence ID" value="AAP19450.1"/>
    <property type="molecule type" value="Genomic_DNA"/>
</dbReference>
<dbReference type="RefSeq" id="NP_709955.1">
    <property type="nucleotide sequence ID" value="NC_004337.2"/>
</dbReference>
<dbReference type="RefSeq" id="WP_011069607.1">
    <property type="nucleotide sequence ID" value="NZ_WPGW01000068.1"/>
</dbReference>
<dbReference type="STRING" id="198214.SF4243"/>
<dbReference type="PaxDb" id="198214-SF4243"/>
<dbReference type="GeneID" id="1024385"/>
<dbReference type="KEGG" id="sfl:SF4243"/>
<dbReference type="KEGG" id="sfx:S4505"/>
<dbReference type="PATRIC" id="fig|623.157.peg.4953"/>
<dbReference type="HOGENOM" id="CLU_213745_0_0_6"/>
<dbReference type="Proteomes" id="UP000001006">
    <property type="component" value="Chromosome"/>
</dbReference>
<dbReference type="Proteomes" id="UP000002673">
    <property type="component" value="Chromosome"/>
</dbReference>
<dbReference type="GO" id="GO:0019856">
    <property type="term" value="P:pyrimidine nucleobase biosynthetic process"/>
    <property type="evidence" value="ECO:0007669"/>
    <property type="project" value="InterPro"/>
</dbReference>
<dbReference type="GO" id="GO:0006221">
    <property type="term" value="P:pyrimidine nucleotide biosynthetic process"/>
    <property type="evidence" value="ECO:0007669"/>
    <property type="project" value="UniProtKB-KW"/>
</dbReference>
<dbReference type="InterPro" id="IPR012602">
    <property type="entry name" value="PyrBI_leader"/>
</dbReference>
<dbReference type="NCBIfam" id="NF007587">
    <property type="entry name" value="PRK10224.1"/>
    <property type="match status" value="1"/>
</dbReference>
<dbReference type="Pfam" id="PF08052">
    <property type="entry name" value="PyrBI_leader"/>
    <property type="match status" value="1"/>
</dbReference>
<dbReference type="PIRSF" id="PIRSF003249">
    <property type="entry name" value="PyrBI_leader"/>
    <property type="match status" value="1"/>
</dbReference>
<proteinExistence type="predicted"/>
<feature type="chain" id="PRO_0000196524" description="pyr operon leader peptide">
    <location>
        <begin position="1"/>
        <end position="44"/>
    </location>
</feature>
<sequence length="44" mass="5114">MVQCVRHFVLPRLKKDAGLPFFFPLITHSQPLNRGAFFCLGVRR</sequence>
<gene>
    <name type="primary">pyrL</name>
    <name type="ordered locus">SF4243</name>
    <name type="ordered locus">S4505</name>
</gene>
<keyword id="KW-0428">Leader peptide</keyword>
<keyword id="KW-0665">Pyrimidine biosynthesis</keyword>
<keyword id="KW-1185">Reference proteome</keyword>
<name>LPPY_SHIFL</name>
<reference key="1">
    <citation type="journal article" date="2002" name="Nucleic Acids Res.">
        <title>Genome sequence of Shigella flexneri 2a: insights into pathogenicity through comparison with genomes of Escherichia coli K12 and O157.</title>
        <authorList>
            <person name="Jin Q."/>
            <person name="Yuan Z."/>
            <person name="Xu J."/>
            <person name="Wang Y."/>
            <person name="Shen Y."/>
            <person name="Lu W."/>
            <person name="Wang J."/>
            <person name="Liu H."/>
            <person name="Yang J."/>
            <person name="Yang F."/>
            <person name="Zhang X."/>
            <person name="Zhang J."/>
            <person name="Yang G."/>
            <person name="Wu H."/>
            <person name="Qu D."/>
            <person name="Dong J."/>
            <person name="Sun L."/>
            <person name="Xue Y."/>
            <person name="Zhao A."/>
            <person name="Gao Y."/>
            <person name="Zhu J."/>
            <person name="Kan B."/>
            <person name="Ding K."/>
            <person name="Chen S."/>
            <person name="Cheng H."/>
            <person name="Yao Z."/>
            <person name="He B."/>
            <person name="Chen R."/>
            <person name="Ma D."/>
            <person name="Qiang B."/>
            <person name="Wen Y."/>
            <person name="Hou Y."/>
            <person name="Yu J."/>
        </authorList>
    </citation>
    <scope>NUCLEOTIDE SEQUENCE [LARGE SCALE GENOMIC DNA]</scope>
    <source>
        <strain>301 / Serotype 2a</strain>
    </source>
</reference>
<reference key="2">
    <citation type="journal article" date="2003" name="Infect. Immun.">
        <title>Complete genome sequence and comparative genomics of Shigella flexneri serotype 2a strain 2457T.</title>
        <authorList>
            <person name="Wei J."/>
            <person name="Goldberg M.B."/>
            <person name="Burland V."/>
            <person name="Venkatesan M.M."/>
            <person name="Deng W."/>
            <person name="Fournier G."/>
            <person name="Mayhew G.F."/>
            <person name="Plunkett G. III"/>
            <person name="Rose D.J."/>
            <person name="Darling A."/>
            <person name="Mau B."/>
            <person name="Perna N.T."/>
            <person name="Payne S.M."/>
            <person name="Runyen-Janecky L.J."/>
            <person name="Zhou S."/>
            <person name="Schwartz D.C."/>
            <person name="Blattner F.R."/>
        </authorList>
    </citation>
    <scope>NUCLEOTIDE SEQUENCE [LARGE SCALE GENOMIC DNA]</scope>
    <source>
        <strain>ATCC 700930 / 2457T / Serotype 2a</strain>
    </source>
</reference>